<accession>B5XYN4</accession>
<organism>
    <name type="scientific">Klebsiella pneumoniae (strain 342)</name>
    <dbReference type="NCBI Taxonomy" id="507522"/>
    <lineage>
        <taxon>Bacteria</taxon>
        <taxon>Pseudomonadati</taxon>
        <taxon>Pseudomonadota</taxon>
        <taxon>Gammaproteobacteria</taxon>
        <taxon>Enterobacterales</taxon>
        <taxon>Enterobacteriaceae</taxon>
        <taxon>Klebsiella/Raoultella group</taxon>
        <taxon>Klebsiella</taxon>
        <taxon>Klebsiella pneumoniae complex</taxon>
    </lineage>
</organism>
<comment type="cofactor">
    <cofactor evidence="1">
        <name>Mg(2+)</name>
        <dbReference type="ChEBI" id="CHEBI:18420"/>
    </cofactor>
    <cofactor evidence="1">
        <name>Mn(2+)</name>
        <dbReference type="ChEBI" id="CHEBI:29035"/>
    </cofactor>
    <text evidence="1">Binds 2 magnesium or manganese ions per subunit.</text>
</comment>
<comment type="similarity">
    <text evidence="1">Belongs to the RimK family.</text>
</comment>
<protein>
    <recommendedName>
        <fullName evidence="1">Probable alpha-L-glutamate ligase</fullName>
        <ecNumber evidence="1">6.3.2.-</ecNumber>
    </recommendedName>
</protein>
<feature type="chain" id="PRO_1000194370" description="Probable alpha-L-glutamate ligase">
    <location>
        <begin position="1"/>
        <end position="300"/>
    </location>
</feature>
<feature type="domain" description="ATP-grasp" evidence="1">
    <location>
        <begin position="104"/>
        <end position="287"/>
    </location>
</feature>
<feature type="binding site" evidence="1">
    <location>
        <position position="141"/>
    </location>
    <ligand>
        <name>ATP</name>
        <dbReference type="ChEBI" id="CHEBI:30616"/>
    </ligand>
</feature>
<feature type="binding site" evidence="1">
    <location>
        <begin position="178"/>
        <end position="179"/>
    </location>
    <ligand>
        <name>ATP</name>
        <dbReference type="ChEBI" id="CHEBI:30616"/>
    </ligand>
</feature>
<feature type="binding site" evidence="1">
    <location>
        <position position="187"/>
    </location>
    <ligand>
        <name>ATP</name>
        <dbReference type="ChEBI" id="CHEBI:30616"/>
    </ligand>
</feature>
<feature type="binding site" evidence="1">
    <location>
        <begin position="211"/>
        <end position="213"/>
    </location>
    <ligand>
        <name>ATP</name>
        <dbReference type="ChEBI" id="CHEBI:30616"/>
    </ligand>
</feature>
<feature type="binding site" evidence="1">
    <location>
        <position position="248"/>
    </location>
    <ligand>
        <name>Mg(2+)</name>
        <dbReference type="ChEBI" id="CHEBI:18420"/>
        <label>1</label>
    </ligand>
</feature>
<feature type="binding site" evidence="1">
    <location>
        <position position="248"/>
    </location>
    <ligand>
        <name>Mn(2+)</name>
        <dbReference type="ChEBI" id="CHEBI:29035"/>
        <label>1</label>
    </ligand>
</feature>
<feature type="binding site" evidence="1">
    <location>
        <position position="260"/>
    </location>
    <ligand>
        <name>Mg(2+)</name>
        <dbReference type="ChEBI" id="CHEBI:18420"/>
        <label>1</label>
    </ligand>
</feature>
<feature type="binding site" evidence="1">
    <location>
        <position position="260"/>
    </location>
    <ligand>
        <name>Mg(2+)</name>
        <dbReference type="ChEBI" id="CHEBI:18420"/>
        <label>2</label>
    </ligand>
</feature>
<feature type="binding site" evidence="1">
    <location>
        <position position="260"/>
    </location>
    <ligand>
        <name>Mn(2+)</name>
        <dbReference type="ChEBI" id="CHEBI:29035"/>
        <label>1</label>
    </ligand>
</feature>
<feature type="binding site" evidence="1">
    <location>
        <position position="260"/>
    </location>
    <ligand>
        <name>Mn(2+)</name>
        <dbReference type="ChEBI" id="CHEBI:29035"/>
        <label>2</label>
    </ligand>
</feature>
<feature type="binding site" evidence="1">
    <location>
        <position position="262"/>
    </location>
    <ligand>
        <name>Mg(2+)</name>
        <dbReference type="ChEBI" id="CHEBI:18420"/>
        <label>2</label>
    </ligand>
</feature>
<feature type="binding site" evidence="1">
    <location>
        <position position="262"/>
    </location>
    <ligand>
        <name>Mn(2+)</name>
        <dbReference type="ChEBI" id="CHEBI:29035"/>
        <label>2</label>
    </ligand>
</feature>
<gene>
    <name evidence="1" type="primary">rimK</name>
    <name type="ordered locus">KPK_3680</name>
</gene>
<dbReference type="EC" id="6.3.2.-" evidence="1"/>
<dbReference type="EMBL" id="CP000964">
    <property type="protein sequence ID" value="ACI11255.1"/>
    <property type="molecule type" value="Genomic_DNA"/>
</dbReference>
<dbReference type="SMR" id="B5XYN4"/>
<dbReference type="KEGG" id="kpe:KPK_3680"/>
<dbReference type="HOGENOM" id="CLU_054353_0_1_6"/>
<dbReference type="Proteomes" id="UP000001734">
    <property type="component" value="Chromosome"/>
</dbReference>
<dbReference type="GO" id="GO:0005737">
    <property type="term" value="C:cytoplasm"/>
    <property type="evidence" value="ECO:0007669"/>
    <property type="project" value="TreeGrafter"/>
</dbReference>
<dbReference type="GO" id="GO:0005524">
    <property type="term" value="F:ATP binding"/>
    <property type="evidence" value="ECO:0007669"/>
    <property type="project" value="UniProtKB-UniRule"/>
</dbReference>
<dbReference type="GO" id="GO:0046872">
    <property type="term" value="F:metal ion binding"/>
    <property type="evidence" value="ECO:0007669"/>
    <property type="project" value="UniProtKB-KW"/>
</dbReference>
<dbReference type="GO" id="GO:0018169">
    <property type="term" value="F:ribosomal S6-glutamic acid ligase activity"/>
    <property type="evidence" value="ECO:0007669"/>
    <property type="project" value="TreeGrafter"/>
</dbReference>
<dbReference type="GO" id="GO:0036211">
    <property type="term" value="P:protein modification process"/>
    <property type="evidence" value="ECO:0007669"/>
    <property type="project" value="InterPro"/>
</dbReference>
<dbReference type="GO" id="GO:0009432">
    <property type="term" value="P:SOS response"/>
    <property type="evidence" value="ECO:0007669"/>
    <property type="project" value="TreeGrafter"/>
</dbReference>
<dbReference type="GO" id="GO:0006412">
    <property type="term" value="P:translation"/>
    <property type="evidence" value="ECO:0007669"/>
    <property type="project" value="UniProtKB-KW"/>
</dbReference>
<dbReference type="FunFam" id="3.40.50.20:FF:000004">
    <property type="entry name" value="Probable alpha-L-glutamate ligase"/>
    <property type="match status" value="1"/>
</dbReference>
<dbReference type="FunFam" id="3.30.1490.20:FF:000005">
    <property type="entry name" value="Probable alpha-L-glutamate ligase 1"/>
    <property type="match status" value="1"/>
</dbReference>
<dbReference type="FunFam" id="3.30.470.20:FF:000016">
    <property type="entry name" value="Ribosomal protein S6--L-glutamate ligase"/>
    <property type="match status" value="1"/>
</dbReference>
<dbReference type="Gene3D" id="3.40.50.20">
    <property type="match status" value="1"/>
</dbReference>
<dbReference type="Gene3D" id="3.30.1490.20">
    <property type="entry name" value="ATP-grasp fold, A domain"/>
    <property type="match status" value="1"/>
</dbReference>
<dbReference type="Gene3D" id="3.30.470.20">
    <property type="entry name" value="ATP-grasp fold, B domain"/>
    <property type="match status" value="1"/>
</dbReference>
<dbReference type="HAMAP" id="MF_01552">
    <property type="entry name" value="RimK"/>
    <property type="match status" value="1"/>
</dbReference>
<dbReference type="InterPro" id="IPR011761">
    <property type="entry name" value="ATP-grasp"/>
</dbReference>
<dbReference type="InterPro" id="IPR013651">
    <property type="entry name" value="ATP-grasp_RimK-type"/>
</dbReference>
<dbReference type="InterPro" id="IPR013815">
    <property type="entry name" value="ATP_grasp_subdomain_1"/>
</dbReference>
<dbReference type="InterPro" id="IPR023533">
    <property type="entry name" value="RimK"/>
</dbReference>
<dbReference type="InterPro" id="IPR041107">
    <property type="entry name" value="Rimk_N"/>
</dbReference>
<dbReference type="InterPro" id="IPR004666">
    <property type="entry name" value="Rp_bS6_RimK/Lys_biosynth_LsyX"/>
</dbReference>
<dbReference type="NCBIfam" id="NF007764">
    <property type="entry name" value="PRK10446.1"/>
    <property type="match status" value="1"/>
</dbReference>
<dbReference type="NCBIfam" id="TIGR00768">
    <property type="entry name" value="rimK_fam"/>
    <property type="match status" value="1"/>
</dbReference>
<dbReference type="PANTHER" id="PTHR21621:SF7">
    <property type="entry name" value="RIBOSOMAL PROTEIN BS6--L-GLUTAMATE LIGASE"/>
    <property type="match status" value="1"/>
</dbReference>
<dbReference type="PANTHER" id="PTHR21621">
    <property type="entry name" value="RIBOSOMAL PROTEIN S6 MODIFICATION PROTEIN"/>
    <property type="match status" value="1"/>
</dbReference>
<dbReference type="Pfam" id="PF08443">
    <property type="entry name" value="RimK"/>
    <property type="match status" value="1"/>
</dbReference>
<dbReference type="Pfam" id="PF18030">
    <property type="entry name" value="Rimk_N"/>
    <property type="match status" value="1"/>
</dbReference>
<dbReference type="SUPFAM" id="SSF56059">
    <property type="entry name" value="Glutathione synthetase ATP-binding domain-like"/>
    <property type="match status" value="1"/>
</dbReference>
<dbReference type="PROSITE" id="PS50975">
    <property type="entry name" value="ATP_GRASP"/>
    <property type="match status" value="1"/>
</dbReference>
<proteinExistence type="inferred from homology"/>
<reference key="1">
    <citation type="journal article" date="2008" name="PLoS Genet.">
        <title>Complete genome sequence of the N2-fixing broad host range endophyte Klebsiella pneumoniae 342 and virulence predictions verified in mice.</title>
        <authorList>
            <person name="Fouts D.E."/>
            <person name="Tyler H.L."/>
            <person name="DeBoy R.T."/>
            <person name="Daugherty S."/>
            <person name="Ren Q."/>
            <person name="Badger J.H."/>
            <person name="Durkin A.S."/>
            <person name="Huot H."/>
            <person name="Shrivastava S."/>
            <person name="Kothari S."/>
            <person name="Dodson R.J."/>
            <person name="Mohamoud Y."/>
            <person name="Khouri H."/>
            <person name="Roesch L.F.W."/>
            <person name="Krogfelt K.A."/>
            <person name="Struve C."/>
            <person name="Triplett E.W."/>
            <person name="Methe B.A."/>
        </authorList>
    </citation>
    <scope>NUCLEOTIDE SEQUENCE [LARGE SCALE GENOMIC DNA]</scope>
    <source>
        <strain>342</strain>
    </source>
</reference>
<name>RIMK_KLEP3</name>
<evidence type="ECO:0000255" key="1">
    <source>
        <dbReference type="HAMAP-Rule" id="MF_01552"/>
    </source>
</evidence>
<sequence length="300" mass="32309">MKIAILSRDGTLYSCRRLREAAQQRGHQVEILDPLSCYMNVSPVASSIHYKGRQLPHFDAVIPRIGSAITYYGTAALRQFELLGSYPLNESVAITRARDKLRSLQLLARQGIDLPLTGIAHSPDDTSDLIAMVGGAPLVVKLVEGTQGIGVVLAETRQAAESVIDAFRGLNAHILVQEYIAEAKGCDIRCLVVGNEVVAAIERRAKEGDFRSNLHRGGMATVAQISDEERAIAIKATQTLGLDVAGVDILRATRGPLVMEVNASPGLEGVETTTGVDIASRMIAWIERQATPEFCLKIGG</sequence>
<keyword id="KW-0067">ATP-binding</keyword>
<keyword id="KW-0436">Ligase</keyword>
<keyword id="KW-0460">Magnesium</keyword>
<keyword id="KW-0464">Manganese</keyword>
<keyword id="KW-0479">Metal-binding</keyword>
<keyword id="KW-0547">Nucleotide-binding</keyword>
<keyword id="KW-0648">Protein biosynthesis</keyword>